<organism>
    <name type="scientific">Conus imperialis</name>
    <name type="common">Imperial cone</name>
    <dbReference type="NCBI Taxonomy" id="35631"/>
    <lineage>
        <taxon>Eukaryota</taxon>
        <taxon>Metazoa</taxon>
        <taxon>Spiralia</taxon>
        <taxon>Lophotrochozoa</taxon>
        <taxon>Mollusca</taxon>
        <taxon>Gastropoda</taxon>
        <taxon>Caenogastropoda</taxon>
        <taxon>Neogastropoda</taxon>
        <taxon>Conoidea</taxon>
        <taxon>Conidae</taxon>
        <taxon>Conus</taxon>
        <taxon>Stephanoconus</taxon>
    </lineage>
</organism>
<evidence type="ECO:0000255" key="1"/>
<evidence type="ECO:0000255" key="2">
    <source>
        <dbReference type="PROSITE-ProRule" id="PRU01005"/>
    </source>
</evidence>
<evidence type="ECO:0000256" key="3">
    <source>
        <dbReference type="SAM" id="MobiDB-lite"/>
    </source>
</evidence>
<evidence type="ECO:0000269" key="4">
    <source>
    </source>
</evidence>
<evidence type="ECO:0000303" key="5">
    <source>
    </source>
</evidence>
<evidence type="ECO:0000305" key="6"/>
<evidence type="ECO:0000305" key="7">
    <source>
    </source>
</evidence>
<dbReference type="SMR" id="P0DUB0"/>
<dbReference type="GO" id="GO:0005576">
    <property type="term" value="C:extracellular region"/>
    <property type="evidence" value="ECO:0007669"/>
    <property type="project" value="UniProtKB-SubCell"/>
</dbReference>
<dbReference type="GO" id="GO:0090729">
    <property type="term" value="F:toxin activity"/>
    <property type="evidence" value="ECO:0007669"/>
    <property type="project" value="UniProtKB-KW"/>
</dbReference>
<dbReference type="InterPro" id="IPR003582">
    <property type="entry name" value="ShKT_dom"/>
</dbReference>
<dbReference type="Pfam" id="PF01549">
    <property type="entry name" value="ShK"/>
    <property type="match status" value="1"/>
</dbReference>
<dbReference type="PROSITE" id="PS51670">
    <property type="entry name" value="SHKT"/>
    <property type="match status" value="1"/>
</dbReference>
<protein>
    <recommendedName>
        <fullName evidence="6">Conotoxin Im14.3</fullName>
    </recommendedName>
    <alternativeName>
        <fullName evidence="5">Conopeptide im031</fullName>
    </alternativeName>
</protein>
<feature type="signal peptide" evidence="1">
    <location>
        <begin position="1"/>
        <end position="17"/>
    </location>
</feature>
<feature type="propeptide" id="PRO_0000451010" evidence="6">
    <location>
        <begin position="18"/>
        <end position="35"/>
    </location>
</feature>
<feature type="chain" id="PRO_5007179760" description="Conotoxin Im14.3" evidence="6">
    <location>
        <begin position="36"/>
        <end position="71"/>
    </location>
</feature>
<feature type="domain" description="ShKT" evidence="2">
    <location>
        <begin position="44"/>
        <end position="73"/>
    </location>
</feature>
<feature type="region of interest" description="Disordered" evidence="3">
    <location>
        <begin position="22"/>
        <end position="42"/>
    </location>
</feature>
<feature type="compositionally biased region" description="Basic and acidic residues" evidence="3">
    <location>
        <begin position="27"/>
        <end position="38"/>
    </location>
</feature>
<reference key="1">
    <citation type="journal article" date="2019" name="Mar. Drugs">
        <title>Transcriptomic-proteomic correlation in the predation-evoked venom of the cone snail, Conus imperialis.</title>
        <authorList>
            <person name="Jin A.H."/>
            <person name="Dutertre S."/>
            <person name="Dutt M."/>
            <person name="Lavergne V."/>
            <person name="Jones A."/>
            <person name="Lewis R.J."/>
            <person name="Alewood P.F."/>
        </authorList>
    </citation>
    <scope>NUCLEOTIDE SEQUENCE [MRNA]</scope>
    <scope>IDENTIFICATION BY MASS SPECTROMETRY</scope>
    <scope>SUBCELLULAR LOCATION</scope>
    <source>
        <tissue>Venom</tissue>
        <tissue>Venom duct</tissue>
    </source>
</reference>
<comment type="function">
    <text evidence="6">Probable neurotoxin.</text>
</comment>
<comment type="subcellular location">
    <subcellularLocation>
        <location evidence="4">Secreted</location>
    </subcellularLocation>
</comment>
<comment type="tissue specificity">
    <text evidence="7">Expressed by the venom duct.</text>
</comment>
<comment type="domain">
    <text evidence="6">The cysteine framework is XIV (C-C-C-C).</text>
</comment>
<comment type="PTM">
    <text evidence="6">Contain 2 disulfide bonds.</text>
</comment>
<name>CUE3_CONIM</name>
<accession>P0DUB0</accession>
<sequence length="73" mass="8034">MGVFRCCLAAALVVVCLSRMGGTEPLESNHEDERRADDTSGDDCVDTNEDCVNWASTGQCEANPSYMRENCRK</sequence>
<proteinExistence type="evidence at protein level"/>
<keyword id="KW-0165">Cleavage on pair of basic residues</keyword>
<keyword id="KW-1015">Disulfide bond</keyword>
<keyword id="KW-0528">Neurotoxin</keyword>
<keyword id="KW-0964">Secreted</keyword>
<keyword id="KW-0732">Signal</keyword>
<keyword id="KW-0800">Toxin</keyword>